<dbReference type="EMBL" id="AC023912">
    <property type="protein sequence ID" value="AAF63822.1"/>
    <property type="status" value="ALT_SEQ"/>
    <property type="molecule type" value="Genomic_DNA"/>
</dbReference>
<dbReference type="EMBL" id="CP002686">
    <property type="protein sequence ID" value="AEE74452.1"/>
    <property type="molecule type" value="Genomic_DNA"/>
</dbReference>
<dbReference type="EMBL" id="AY074585">
    <property type="protein sequence ID" value="AAL67123.1"/>
    <property type="molecule type" value="mRNA"/>
</dbReference>
<dbReference type="EMBL" id="AY133641">
    <property type="protein sequence ID" value="AAM91471.1"/>
    <property type="molecule type" value="mRNA"/>
</dbReference>
<dbReference type="RefSeq" id="NP_187332.2">
    <molecule id="Q8VXU6-1"/>
    <property type="nucleotide sequence ID" value="NM_111556.4"/>
</dbReference>
<dbReference type="FunCoup" id="Q8VXU6">
    <property type="interactions" value="183"/>
</dbReference>
<dbReference type="STRING" id="3702.Q8VXU6"/>
<dbReference type="GlyGen" id="Q8VXU6">
    <property type="glycosylation" value="1 site"/>
</dbReference>
<dbReference type="EnsemblPlants" id="AT3G06760.1">
    <molecule id="Q8VXU6-1"/>
    <property type="protein sequence ID" value="AT3G06760.1"/>
    <property type="gene ID" value="AT3G06760"/>
</dbReference>
<dbReference type="GeneID" id="819861"/>
<dbReference type="Gramene" id="AT3G06760.1">
    <molecule id="Q8VXU6-1"/>
    <property type="protein sequence ID" value="AT3G06760.1"/>
    <property type="gene ID" value="AT3G06760"/>
</dbReference>
<dbReference type="KEGG" id="ath:AT3G06760"/>
<dbReference type="Araport" id="AT3G06760"/>
<dbReference type="TAIR" id="AT3G06760"/>
<dbReference type="HOGENOM" id="CLU_072240_0_1_1"/>
<dbReference type="InParanoid" id="Q8VXU6"/>
<dbReference type="OMA" id="SWNRIFT"/>
<dbReference type="OrthoDB" id="6270329at2759"/>
<dbReference type="PhylomeDB" id="Q8VXU6"/>
<dbReference type="PRO" id="PR:Q8VXU6"/>
<dbReference type="Proteomes" id="UP000006548">
    <property type="component" value="Chromosome 3"/>
</dbReference>
<dbReference type="ExpressionAtlas" id="Q8VXU6">
    <property type="expression patterns" value="baseline and differential"/>
</dbReference>
<dbReference type="GO" id="GO:0048471">
    <property type="term" value="C:perinuclear region of cytoplasm"/>
    <property type="evidence" value="ECO:0007669"/>
    <property type="project" value="UniProtKB-SubCell"/>
</dbReference>
<dbReference type="InterPro" id="IPR033347">
    <property type="entry name" value="DI19"/>
</dbReference>
<dbReference type="InterPro" id="IPR027935">
    <property type="entry name" value="Di19_C"/>
</dbReference>
<dbReference type="InterPro" id="IPR008598">
    <property type="entry name" value="Di19_Zn-bd"/>
</dbReference>
<dbReference type="PANTHER" id="PTHR31875">
    <property type="entry name" value="PROTEIN DEHYDRATION-INDUCED 19"/>
    <property type="match status" value="1"/>
</dbReference>
<dbReference type="PANTHER" id="PTHR31875:SF23">
    <property type="entry name" value="PROTEIN DEHYDRATION-INDUCED 19 HOMOLOG 4"/>
    <property type="match status" value="1"/>
</dbReference>
<dbReference type="Pfam" id="PF14571">
    <property type="entry name" value="Di19_C"/>
    <property type="match status" value="1"/>
</dbReference>
<dbReference type="Pfam" id="PF05605">
    <property type="entry name" value="zf-Di19"/>
    <property type="match status" value="1"/>
</dbReference>
<comment type="subcellular location">
    <subcellularLocation>
        <location evidence="3">Cytoplasm</location>
        <location evidence="3">Perinuclear region</location>
    </subcellularLocation>
    <text>May be part of the endoplasmic reticulum.</text>
</comment>
<comment type="alternative products">
    <event type="alternative splicing"/>
    <isoform>
        <id>Q8VXU6-1</id>
        <name>1</name>
        <sequence type="displayed"/>
    </isoform>
    <text>A number of isoforms are produced. According to EST sequences.</text>
</comment>
<comment type="tissue specificity">
    <text evidence="3">Expressed in seedlings, roots, leaves, stems, flowers and siliques.</text>
</comment>
<comment type="induction">
    <text evidence="3">By salt stress, but not by abscisic acid.</text>
</comment>
<comment type="PTM">
    <text evidence="3">Phosphorylated in vitro by CPK3 or CPK11.</text>
</comment>
<comment type="similarity">
    <text evidence="4">Belongs to the Di19 family.</text>
</comment>
<comment type="sequence caution" evidence="4">
    <conflict type="erroneous gene model prediction">
        <sequence resource="EMBL-CDS" id="AAF63822"/>
    </conflict>
</comment>
<evidence type="ECO:0000250" key="1">
    <source>
        <dbReference type="UniProtKB" id="Q39083"/>
    </source>
</evidence>
<evidence type="ECO:0000256" key="2">
    <source>
        <dbReference type="SAM" id="MobiDB-lite"/>
    </source>
</evidence>
<evidence type="ECO:0000269" key="3">
    <source>
    </source>
</evidence>
<evidence type="ECO:0000305" key="4"/>
<name>DI194_ARATH</name>
<sequence>MDSNWINCPSVFSSSSSSSRRCQSRSDLYLGGGYEDLEGEDDLKAEFICPFCAEDFDIVGLCCHIDEEHPVEAKNGVCPVCTKRVGLDIVGHITTQHANFFKVQRRRRLRRGGYSSTYLALKKELREANLQSLLGGSSSFTSSTNIDSDPLLSSFMFNSPSVNQSANKSATPVTVGNAATKVSIKESLKRDIQEAPLSGEDQEKAKKSEFVRGLLLSTMLEDDF</sequence>
<protein>
    <recommendedName>
        <fullName>Protein DEHYDRATION-INDUCED 19 homolog 4</fullName>
        <shortName>AtDi19-4</shortName>
    </recommendedName>
</protein>
<organism>
    <name type="scientific">Arabidopsis thaliana</name>
    <name type="common">Mouse-ear cress</name>
    <dbReference type="NCBI Taxonomy" id="3702"/>
    <lineage>
        <taxon>Eukaryota</taxon>
        <taxon>Viridiplantae</taxon>
        <taxon>Streptophyta</taxon>
        <taxon>Embryophyta</taxon>
        <taxon>Tracheophyta</taxon>
        <taxon>Spermatophyta</taxon>
        <taxon>Magnoliopsida</taxon>
        <taxon>eudicotyledons</taxon>
        <taxon>Gunneridae</taxon>
        <taxon>Pentapetalae</taxon>
        <taxon>rosids</taxon>
        <taxon>malvids</taxon>
        <taxon>Brassicales</taxon>
        <taxon>Brassicaceae</taxon>
        <taxon>Camelineae</taxon>
        <taxon>Arabidopsis</taxon>
    </lineage>
</organism>
<feature type="chain" id="PRO_0000304416" description="Protein DEHYDRATION-INDUCED 19 homolog 4">
    <location>
        <begin position="1"/>
        <end position="224"/>
    </location>
</feature>
<feature type="region of interest" description="Disordered" evidence="2">
    <location>
        <begin position="1"/>
        <end position="23"/>
    </location>
</feature>
<feature type="compositionally biased region" description="Polar residues" evidence="2">
    <location>
        <begin position="1"/>
        <end position="12"/>
    </location>
</feature>
<feature type="compositionally biased region" description="Low complexity" evidence="2">
    <location>
        <begin position="13"/>
        <end position="23"/>
    </location>
</feature>
<feature type="modified residue" description="Phosphothreonine" evidence="1">
    <location>
        <position position="117"/>
    </location>
</feature>
<gene>
    <name type="primary">DI19-4</name>
    <name type="ordered locus">At3g06760</name>
    <name type="ORF">F3E22.10</name>
</gene>
<accession>Q8VXU6</accession>
<accession>Q9M7Y2</accession>
<keyword id="KW-0025">Alternative splicing</keyword>
<keyword id="KW-0963">Cytoplasm</keyword>
<keyword id="KW-0597">Phosphoprotein</keyword>
<keyword id="KW-1185">Reference proteome</keyword>
<proteinExistence type="evidence at protein level"/>
<reference key="1">
    <citation type="journal article" date="2000" name="Nature">
        <title>Sequence and analysis of chromosome 3 of the plant Arabidopsis thaliana.</title>
        <authorList>
            <person name="Salanoubat M."/>
            <person name="Lemcke K."/>
            <person name="Rieger M."/>
            <person name="Ansorge W."/>
            <person name="Unseld M."/>
            <person name="Fartmann B."/>
            <person name="Valle G."/>
            <person name="Bloecker H."/>
            <person name="Perez-Alonso M."/>
            <person name="Obermaier B."/>
            <person name="Delseny M."/>
            <person name="Boutry M."/>
            <person name="Grivell L.A."/>
            <person name="Mache R."/>
            <person name="Puigdomenech P."/>
            <person name="De Simone V."/>
            <person name="Choisne N."/>
            <person name="Artiguenave F."/>
            <person name="Robert C."/>
            <person name="Brottier P."/>
            <person name="Wincker P."/>
            <person name="Cattolico L."/>
            <person name="Weissenbach J."/>
            <person name="Saurin W."/>
            <person name="Quetier F."/>
            <person name="Schaefer M."/>
            <person name="Mueller-Auer S."/>
            <person name="Gabel C."/>
            <person name="Fuchs M."/>
            <person name="Benes V."/>
            <person name="Wurmbach E."/>
            <person name="Drzonek H."/>
            <person name="Erfle H."/>
            <person name="Jordan N."/>
            <person name="Bangert S."/>
            <person name="Wiedelmann R."/>
            <person name="Kranz H."/>
            <person name="Voss H."/>
            <person name="Holland R."/>
            <person name="Brandt P."/>
            <person name="Nyakatura G."/>
            <person name="Vezzi A."/>
            <person name="D'Angelo M."/>
            <person name="Pallavicini A."/>
            <person name="Toppo S."/>
            <person name="Simionati B."/>
            <person name="Conrad A."/>
            <person name="Hornischer K."/>
            <person name="Kauer G."/>
            <person name="Loehnert T.-H."/>
            <person name="Nordsiek G."/>
            <person name="Reichelt J."/>
            <person name="Scharfe M."/>
            <person name="Schoen O."/>
            <person name="Bargues M."/>
            <person name="Terol J."/>
            <person name="Climent J."/>
            <person name="Navarro P."/>
            <person name="Collado C."/>
            <person name="Perez-Perez A."/>
            <person name="Ottenwaelder B."/>
            <person name="Duchemin D."/>
            <person name="Cooke R."/>
            <person name="Laudie M."/>
            <person name="Berger-Llauro C."/>
            <person name="Purnelle B."/>
            <person name="Masuy D."/>
            <person name="de Haan M."/>
            <person name="Maarse A.C."/>
            <person name="Alcaraz J.-P."/>
            <person name="Cottet A."/>
            <person name="Casacuberta E."/>
            <person name="Monfort A."/>
            <person name="Argiriou A."/>
            <person name="Flores M."/>
            <person name="Liguori R."/>
            <person name="Vitale D."/>
            <person name="Mannhaupt G."/>
            <person name="Haase D."/>
            <person name="Schoof H."/>
            <person name="Rudd S."/>
            <person name="Zaccaria P."/>
            <person name="Mewes H.-W."/>
            <person name="Mayer K.F.X."/>
            <person name="Kaul S."/>
            <person name="Town C.D."/>
            <person name="Koo H.L."/>
            <person name="Tallon L.J."/>
            <person name="Jenkins J."/>
            <person name="Rooney T."/>
            <person name="Rizzo M."/>
            <person name="Walts A."/>
            <person name="Utterback T."/>
            <person name="Fujii C.Y."/>
            <person name="Shea T.P."/>
            <person name="Creasy T.H."/>
            <person name="Haas B."/>
            <person name="Maiti R."/>
            <person name="Wu D."/>
            <person name="Peterson J."/>
            <person name="Van Aken S."/>
            <person name="Pai G."/>
            <person name="Militscher J."/>
            <person name="Sellers P."/>
            <person name="Gill J.E."/>
            <person name="Feldblyum T.V."/>
            <person name="Preuss D."/>
            <person name="Lin X."/>
            <person name="Nierman W.C."/>
            <person name="Salzberg S.L."/>
            <person name="White O."/>
            <person name="Venter J.C."/>
            <person name="Fraser C.M."/>
            <person name="Kaneko T."/>
            <person name="Nakamura Y."/>
            <person name="Sato S."/>
            <person name="Kato T."/>
            <person name="Asamizu E."/>
            <person name="Sasamoto S."/>
            <person name="Kimura T."/>
            <person name="Idesawa K."/>
            <person name="Kawashima K."/>
            <person name="Kishida Y."/>
            <person name="Kiyokawa C."/>
            <person name="Kohara M."/>
            <person name="Matsumoto M."/>
            <person name="Matsuno A."/>
            <person name="Muraki A."/>
            <person name="Nakayama S."/>
            <person name="Nakazaki N."/>
            <person name="Shinpo S."/>
            <person name="Takeuchi C."/>
            <person name="Wada T."/>
            <person name="Watanabe A."/>
            <person name="Yamada M."/>
            <person name="Yasuda M."/>
            <person name="Tabata S."/>
        </authorList>
    </citation>
    <scope>NUCLEOTIDE SEQUENCE [LARGE SCALE GENOMIC DNA]</scope>
    <source>
        <strain>cv. Columbia</strain>
    </source>
</reference>
<reference key="2">
    <citation type="journal article" date="2017" name="Plant J.">
        <title>Araport11: a complete reannotation of the Arabidopsis thaliana reference genome.</title>
        <authorList>
            <person name="Cheng C.Y."/>
            <person name="Krishnakumar V."/>
            <person name="Chan A.P."/>
            <person name="Thibaud-Nissen F."/>
            <person name="Schobel S."/>
            <person name="Town C.D."/>
        </authorList>
    </citation>
    <scope>GENOME REANNOTATION</scope>
    <source>
        <strain>cv. Columbia</strain>
    </source>
</reference>
<reference key="3">
    <citation type="journal article" date="2003" name="Science">
        <title>Empirical analysis of transcriptional activity in the Arabidopsis genome.</title>
        <authorList>
            <person name="Yamada K."/>
            <person name="Lim J."/>
            <person name="Dale J.M."/>
            <person name="Chen H."/>
            <person name="Shinn P."/>
            <person name="Palm C.J."/>
            <person name="Southwick A.M."/>
            <person name="Wu H.C."/>
            <person name="Kim C.J."/>
            <person name="Nguyen M."/>
            <person name="Pham P.K."/>
            <person name="Cheuk R.F."/>
            <person name="Karlin-Newmann G."/>
            <person name="Liu S.X."/>
            <person name="Lam B."/>
            <person name="Sakano H."/>
            <person name="Wu T."/>
            <person name="Yu G."/>
            <person name="Miranda M."/>
            <person name="Quach H.L."/>
            <person name="Tripp M."/>
            <person name="Chang C.H."/>
            <person name="Lee J.M."/>
            <person name="Toriumi M.J."/>
            <person name="Chan M.M."/>
            <person name="Tang C.C."/>
            <person name="Onodera C.S."/>
            <person name="Deng J.M."/>
            <person name="Akiyama K."/>
            <person name="Ansari Y."/>
            <person name="Arakawa T."/>
            <person name="Banh J."/>
            <person name="Banno F."/>
            <person name="Bowser L."/>
            <person name="Brooks S.Y."/>
            <person name="Carninci P."/>
            <person name="Chao Q."/>
            <person name="Choy N."/>
            <person name="Enju A."/>
            <person name="Goldsmith A.D."/>
            <person name="Gurjal M."/>
            <person name="Hansen N.F."/>
            <person name="Hayashizaki Y."/>
            <person name="Johnson-Hopson C."/>
            <person name="Hsuan V.W."/>
            <person name="Iida K."/>
            <person name="Karnes M."/>
            <person name="Khan S."/>
            <person name="Koesema E."/>
            <person name="Ishida J."/>
            <person name="Jiang P.X."/>
            <person name="Jones T."/>
            <person name="Kawai J."/>
            <person name="Kamiya A."/>
            <person name="Meyers C."/>
            <person name="Nakajima M."/>
            <person name="Narusaka M."/>
            <person name="Seki M."/>
            <person name="Sakurai T."/>
            <person name="Satou M."/>
            <person name="Tamse R."/>
            <person name="Vaysberg M."/>
            <person name="Wallender E.K."/>
            <person name="Wong C."/>
            <person name="Yamamura Y."/>
            <person name="Yuan S."/>
            <person name="Shinozaki K."/>
            <person name="Davis R.W."/>
            <person name="Theologis A."/>
            <person name="Ecker J.R."/>
        </authorList>
    </citation>
    <scope>NUCLEOTIDE SEQUENCE [LARGE SCALE MRNA]</scope>
    <source>
        <strain>cv. Columbia</strain>
    </source>
</reference>
<reference key="4">
    <citation type="journal article" date="2006" name="Plant Mol. Biol.">
        <title>The Arabidopsis AtDi19 gene family encodes a novel type of Cys2/His2 zinc-finger protein implicated in ABA-independent dehydration, high-salinity stress and light signaling pathways.</title>
        <authorList>
            <person name="Rodriguez Milla M.A."/>
            <person name="Townsend J."/>
            <person name="Chang I.-F."/>
            <person name="Cushman J.C."/>
        </authorList>
    </citation>
    <scope>SUBCELLULAR LOCATION</scope>
    <scope>TISSUE SPECIFICITY</scope>
    <scope>PHOSPHORYLATION</scope>
    <scope>INDUCTION BY SALT</scope>
    <scope>GENE FAMILY</scope>
    <scope>NOMENCLATURE</scope>
</reference>